<organism>
    <name type="scientific">Homo sapiens</name>
    <name type="common">Human</name>
    <dbReference type="NCBI Taxonomy" id="9606"/>
    <lineage>
        <taxon>Eukaryota</taxon>
        <taxon>Metazoa</taxon>
        <taxon>Chordata</taxon>
        <taxon>Craniata</taxon>
        <taxon>Vertebrata</taxon>
        <taxon>Euteleostomi</taxon>
        <taxon>Mammalia</taxon>
        <taxon>Eutheria</taxon>
        <taxon>Euarchontoglires</taxon>
        <taxon>Primates</taxon>
        <taxon>Haplorrhini</taxon>
        <taxon>Catarrhini</taxon>
        <taxon>Hominidae</taxon>
        <taxon>Homo</taxon>
    </lineage>
</organism>
<gene>
    <name evidence="26" type="primary">MBD2</name>
</gene>
<dbReference type="EMBL" id="AF072242">
    <property type="protein sequence ID" value="AAC68871.1"/>
    <property type="molecule type" value="mRNA"/>
</dbReference>
<dbReference type="EMBL" id="AF072246">
    <property type="protein sequence ID" value="AAC68875.1"/>
    <property type="molecule type" value="mRNA"/>
</dbReference>
<dbReference type="EMBL" id="AF120989">
    <property type="protein sequence ID" value="AAD56596.1"/>
    <property type="molecule type" value="Genomic_DNA"/>
</dbReference>
<dbReference type="EMBL" id="AF120988">
    <property type="protein sequence ID" value="AAD56596.1"/>
    <property type="status" value="JOINED"/>
    <property type="molecule type" value="Genomic_DNA"/>
</dbReference>
<dbReference type="EMBL" id="AF120993">
    <property type="protein sequence ID" value="AAD56597.1"/>
    <property type="molecule type" value="Genomic_DNA"/>
</dbReference>
<dbReference type="EMBL" id="AF120988">
    <property type="protein sequence ID" value="AAD56597.1"/>
    <property type="status" value="JOINED"/>
    <property type="molecule type" value="Genomic_DNA"/>
</dbReference>
<dbReference type="EMBL" id="AF120989">
    <property type="protein sequence ID" value="AAD56597.1"/>
    <property type="status" value="JOINED"/>
    <property type="molecule type" value="Genomic_DNA"/>
</dbReference>
<dbReference type="EMBL" id="AF120990">
    <property type="protein sequence ID" value="AAD56597.1"/>
    <property type="status" value="JOINED"/>
    <property type="molecule type" value="Genomic_DNA"/>
</dbReference>
<dbReference type="EMBL" id="AF120991">
    <property type="protein sequence ID" value="AAD56597.1"/>
    <property type="status" value="JOINED"/>
    <property type="molecule type" value="Genomic_DNA"/>
</dbReference>
<dbReference type="EMBL" id="AF120992">
    <property type="protein sequence ID" value="AAD56597.1"/>
    <property type="status" value="JOINED"/>
    <property type="molecule type" value="Genomic_DNA"/>
</dbReference>
<dbReference type="EMBL" id="BC032638">
    <property type="protein sequence ID" value="AAH32638.1"/>
    <property type="molecule type" value="mRNA"/>
</dbReference>
<dbReference type="CCDS" id="CCDS11953.1">
    <molecule id="Q9UBB5-1"/>
</dbReference>
<dbReference type="CCDS" id="CCDS45871.1">
    <molecule id="Q9UBB5-3"/>
</dbReference>
<dbReference type="RefSeq" id="NP_003918.1">
    <molecule id="Q9UBB5-1"/>
    <property type="nucleotide sequence ID" value="NM_003927.5"/>
</dbReference>
<dbReference type="RefSeq" id="NP_056647.1">
    <molecule id="Q9UBB5-3"/>
    <property type="nucleotide sequence ID" value="NM_015832.6"/>
</dbReference>
<dbReference type="PDB" id="2L2L">
    <property type="method" value="NMR"/>
    <property type="chains" value="B=360-393"/>
</dbReference>
<dbReference type="PDB" id="6C1A">
    <property type="method" value="X-ray"/>
    <property type="resolution" value="2.05 A"/>
    <property type="chains" value="A/B/E/F=143-220"/>
</dbReference>
<dbReference type="PDB" id="6C1T">
    <property type="method" value="X-ray"/>
    <property type="resolution" value="1.84 A"/>
    <property type="chains" value="A/D=143-220"/>
</dbReference>
<dbReference type="PDB" id="6C1U">
    <property type="method" value="X-ray"/>
    <property type="resolution" value="2.30 A"/>
    <property type="chains" value="A/B/E/F=143-220"/>
</dbReference>
<dbReference type="PDB" id="6C1V">
    <property type="method" value="X-ray"/>
    <property type="resolution" value="2.30 A"/>
    <property type="chains" value="A/B/E/F=143-220"/>
</dbReference>
<dbReference type="PDB" id="6C2F">
    <property type="method" value="X-ray"/>
    <property type="resolution" value="2.65 A"/>
    <property type="chains" value="A/D/G/J/M/P=143-220"/>
</dbReference>
<dbReference type="PDB" id="6CNP">
    <property type="method" value="X-ray"/>
    <property type="resolution" value="2.10 A"/>
    <property type="chains" value="A/B=143-220"/>
</dbReference>
<dbReference type="PDB" id="6CNQ">
    <property type="method" value="X-ray"/>
    <property type="resolution" value="2.15 A"/>
    <property type="chains" value="A/B=143-220"/>
</dbReference>
<dbReference type="PDB" id="7AO8">
    <property type="method" value="EM"/>
    <property type="resolution" value="4.50 A"/>
    <property type="chains" value="C=1-411"/>
</dbReference>
<dbReference type="PDB" id="7AO9">
    <property type="method" value="EM"/>
    <property type="resolution" value="6.10 A"/>
    <property type="chains" value="C=1-411"/>
</dbReference>
<dbReference type="PDB" id="7AOA">
    <property type="method" value="EM"/>
    <property type="resolution" value="19.40 A"/>
    <property type="chains" value="C=1-411"/>
</dbReference>
<dbReference type="PDB" id="7MWK">
    <property type="method" value="X-ray"/>
    <property type="resolution" value="2.45 A"/>
    <property type="chains" value="A/B=143-220"/>
</dbReference>
<dbReference type="PDB" id="7MWM">
    <property type="method" value="X-ray"/>
    <property type="resolution" value="1.60 A"/>
    <property type="chains" value="A/B=143-220"/>
</dbReference>
<dbReference type="PDB" id="7RAY">
    <property type="method" value="X-ray"/>
    <property type="resolution" value="1.78 A"/>
    <property type="chains" value="A=143-220"/>
</dbReference>
<dbReference type="PDBsum" id="2L2L"/>
<dbReference type="PDBsum" id="6C1A"/>
<dbReference type="PDBsum" id="6C1T"/>
<dbReference type="PDBsum" id="6C1U"/>
<dbReference type="PDBsum" id="6C1V"/>
<dbReference type="PDBsum" id="6C2F"/>
<dbReference type="PDBsum" id="6CNP"/>
<dbReference type="PDBsum" id="6CNQ"/>
<dbReference type="PDBsum" id="7AO8"/>
<dbReference type="PDBsum" id="7AO9"/>
<dbReference type="PDBsum" id="7AOA"/>
<dbReference type="PDBsum" id="7MWK"/>
<dbReference type="PDBsum" id="7MWM"/>
<dbReference type="PDBsum" id="7RAY"/>
<dbReference type="BMRB" id="Q9UBB5"/>
<dbReference type="EMDB" id="EMD-11837"/>
<dbReference type="EMDB" id="EMD-11838"/>
<dbReference type="EMDB" id="EMD-11839"/>
<dbReference type="SMR" id="Q9UBB5"/>
<dbReference type="BioGRID" id="114445">
    <property type="interactions" value="173"/>
</dbReference>
<dbReference type="ComplexPortal" id="CPX-880">
    <property type="entry name" value="MBD2/NuRD nucleosome remodeling and deacetylase complex"/>
</dbReference>
<dbReference type="CORUM" id="Q9UBB5"/>
<dbReference type="FunCoup" id="Q9UBB5">
    <property type="interactions" value="2343"/>
</dbReference>
<dbReference type="IntAct" id="Q9UBB5">
    <property type="interactions" value="51"/>
</dbReference>
<dbReference type="MINT" id="Q9UBB5"/>
<dbReference type="STRING" id="9606.ENSP00000256429"/>
<dbReference type="BindingDB" id="Q9UBB5"/>
<dbReference type="ChEMBL" id="CHEMBL3707462"/>
<dbReference type="iPTMnet" id="Q9UBB5"/>
<dbReference type="PhosphoSitePlus" id="Q9UBB5"/>
<dbReference type="BioMuta" id="MBD2"/>
<dbReference type="DMDM" id="50401198"/>
<dbReference type="jPOST" id="Q9UBB5"/>
<dbReference type="MassIVE" id="Q9UBB5"/>
<dbReference type="PaxDb" id="9606-ENSP00000256429"/>
<dbReference type="PeptideAtlas" id="Q9UBB5"/>
<dbReference type="ProteomicsDB" id="83923">
    <molecule id="Q9UBB5-1"/>
</dbReference>
<dbReference type="ProteomicsDB" id="83924">
    <molecule id="Q9UBB5-3"/>
</dbReference>
<dbReference type="Pumba" id="Q9UBB5"/>
<dbReference type="Antibodypedia" id="9530">
    <property type="antibodies" value="388 antibodies from 37 providers"/>
</dbReference>
<dbReference type="DNASU" id="8932"/>
<dbReference type="Ensembl" id="ENST00000256429.8">
    <molecule id="Q9UBB5-1"/>
    <property type="protein sequence ID" value="ENSP00000256429.3"/>
    <property type="gene ID" value="ENSG00000134046.12"/>
</dbReference>
<dbReference type="Ensembl" id="ENST00000583046.1">
    <molecule id="Q9UBB5-3"/>
    <property type="protein sequence ID" value="ENSP00000464554.1"/>
    <property type="gene ID" value="ENSG00000134046.12"/>
</dbReference>
<dbReference type="GeneID" id="8932"/>
<dbReference type="KEGG" id="hsa:8932"/>
<dbReference type="MANE-Select" id="ENST00000256429.8">
    <property type="protein sequence ID" value="ENSP00000256429.3"/>
    <property type="RefSeq nucleotide sequence ID" value="NM_003927.5"/>
    <property type="RefSeq protein sequence ID" value="NP_003918.1"/>
</dbReference>
<dbReference type="UCSC" id="uc002lfg.2">
    <molecule id="Q9UBB5-1"/>
    <property type="organism name" value="human"/>
</dbReference>
<dbReference type="AGR" id="HGNC:6917"/>
<dbReference type="CTD" id="8932"/>
<dbReference type="DisGeNET" id="8932"/>
<dbReference type="GeneCards" id="MBD2"/>
<dbReference type="HGNC" id="HGNC:6917">
    <property type="gene designation" value="MBD2"/>
</dbReference>
<dbReference type="HPA" id="ENSG00000134046">
    <property type="expression patterns" value="Low tissue specificity"/>
</dbReference>
<dbReference type="MIM" id="603547">
    <property type="type" value="gene"/>
</dbReference>
<dbReference type="neXtProt" id="NX_Q9UBB5"/>
<dbReference type="OpenTargets" id="ENSG00000134046"/>
<dbReference type="PharmGKB" id="PA30660"/>
<dbReference type="VEuPathDB" id="HostDB:ENSG00000134046"/>
<dbReference type="eggNOG" id="KOG4161">
    <property type="taxonomic scope" value="Eukaryota"/>
</dbReference>
<dbReference type="GeneTree" id="ENSGT00950000183005"/>
<dbReference type="HOGENOM" id="CLU_055454_0_0_1"/>
<dbReference type="InParanoid" id="Q9UBB5"/>
<dbReference type="OMA" id="SGKMPHR"/>
<dbReference type="OrthoDB" id="10072024at2759"/>
<dbReference type="PAN-GO" id="Q9UBB5">
    <property type="GO annotations" value="0 GO annotations based on evolutionary models"/>
</dbReference>
<dbReference type="PhylomeDB" id="Q9UBB5"/>
<dbReference type="TreeFam" id="TF325032"/>
<dbReference type="PathwayCommons" id="Q9UBB5"/>
<dbReference type="Reactome" id="R-HSA-427413">
    <property type="pathway name" value="NoRC negatively regulates rRNA expression"/>
</dbReference>
<dbReference type="Reactome" id="R-HSA-73728">
    <property type="pathway name" value="RNA Polymerase I Promoter Opening"/>
</dbReference>
<dbReference type="SignaLink" id="Q9UBB5"/>
<dbReference type="SIGNOR" id="Q9UBB5"/>
<dbReference type="BioGRID-ORCS" id="8932">
    <property type="hits" value="42 hits in 1184 CRISPR screens"/>
</dbReference>
<dbReference type="ChiTaRS" id="MBD2">
    <property type="organism name" value="human"/>
</dbReference>
<dbReference type="EvolutionaryTrace" id="Q9UBB5"/>
<dbReference type="GeneWiki" id="Methyl-CpG-binding_domain_protein_2"/>
<dbReference type="GenomeRNAi" id="8932"/>
<dbReference type="Pharos" id="Q9UBB5">
    <property type="development level" value="Tchem"/>
</dbReference>
<dbReference type="PRO" id="PR:Q9UBB5"/>
<dbReference type="Proteomes" id="UP000005640">
    <property type="component" value="Chromosome 18"/>
</dbReference>
<dbReference type="RNAct" id="Q9UBB5">
    <property type="molecule type" value="protein"/>
</dbReference>
<dbReference type="Bgee" id="ENSG00000134046">
    <property type="expression patterns" value="Expressed in gingival epithelium and 212 other cell types or tissues"/>
</dbReference>
<dbReference type="ExpressionAtlas" id="Q9UBB5">
    <property type="expression patterns" value="baseline and differential"/>
</dbReference>
<dbReference type="GO" id="GO:0000785">
    <property type="term" value="C:chromatin"/>
    <property type="evidence" value="ECO:0000314"/>
    <property type="project" value="UniProtKB"/>
</dbReference>
<dbReference type="GO" id="GO:0005829">
    <property type="term" value="C:cytosol"/>
    <property type="evidence" value="ECO:0000314"/>
    <property type="project" value="HPA"/>
</dbReference>
<dbReference type="GO" id="GO:0000792">
    <property type="term" value="C:heterochromatin"/>
    <property type="evidence" value="ECO:0007669"/>
    <property type="project" value="Ensembl"/>
</dbReference>
<dbReference type="GO" id="GO:0005654">
    <property type="term" value="C:nucleoplasm"/>
    <property type="evidence" value="ECO:0000314"/>
    <property type="project" value="HPA"/>
</dbReference>
<dbReference type="GO" id="GO:0005634">
    <property type="term" value="C:nucleus"/>
    <property type="evidence" value="ECO:0000314"/>
    <property type="project" value="UniProtKB"/>
</dbReference>
<dbReference type="GO" id="GO:0016581">
    <property type="term" value="C:NuRD complex"/>
    <property type="evidence" value="ECO:0000314"/>
    <property type="project" value="UniProtKB"/>
</dbReference>
<dbReference type="GO" id="GO:0032991">
    <property type="term" value="C:protein-containing complex"/>
    <property type="evidence" value="ECO:0007005"/>
    <property type="project" value="UniProtKB"/>
</dbReference>
<dbReference type="GO" id="GO:0070742">
    <property type="term" value="F:C2H2 zinc finger domain binding"/>
    <property type="evidence" value="ECO:0000353"/>
    <property type="project" value="UniProtKB"/>
</dbReference>
<dbReference type="GO" id="GO:0003682">
    <property type="term" value="F:chromatin binding"/>
    <property type="evidence" value="ECO:0007669"/>
    <property type="project" value="Ensembl"/>
</dbReference>
<dbReference type="GO" id="GO:0042802">
    <property type="term" value="F:identical protein binding"/>
    <property type="evidence" value="ECO:0007669"/>
    <property type="project" value="Ensembl"/>
</dbReference>
<dbReference type="GO" id="GO:0008327">
    <property type="term" value="F:methyl-CpG binding"/>
    <property type="evidence" value="ECO:0000314"/>
    <property type="project" value="UniProtKB"/>
</dbReference>
<dbReference type="GO" id="GO:0060090">
    <property type="term" value="F:molecular adaptor activity"/>
    <property type="evidence" value="ECO:0000269"/>
    <property type="project" value="DisProt"/>
</dbReference>
<dbReference type="GO" id="GO:0003729">
    <property type="term" value="F:mRNA binding"/>
    <property type="evidence" value="ECO:0007669"/>
    <property type="project" value="Ensembl"/>
</dbReference>
<dbReference type="GO" id="GO:0019904">
    <property type="term" value="F:protein domain specific binding"/>
    <property type="evidence" value="ECO:0000353"/>
    <property type="project" value="UniProtKB"/>
</dbReference>
<dbReference type="GO" id="GO:0003696">
    <property type="term" value="F:satellite DNA binding"/>
    <property type="evidence" value="ECO:0000304"/>
    <property type="project" value="ProtInc"/>
</dbReference>
<dbReference type="GO" id="GO:0035197">
    <property type="term" value="F:siRNA binding"/>
    <property type="evidence" value="ECO:0007669"/>
    <property type="project" value="Ensembl"/>
</dbReference>
<dbReference type="GO" id="GO:0006338">
    <property type="term" value="P:chromatin remodeling"/>
    <property type="evidence" value="ECO:0000314"/>
    <property type="project" value="UniProtKB"/>
</dbReference>
<dbReference type="GO" id="GO:0006346">
    <property type="term" value="P:DNA methylation-dependent constitutive heterochromatin formation"/>
    <property type="evidence" value="ECO:0000316"/>
    <property type="project" value="BHF-UCL"/>
</dbReference>
<dbReference type="GO" id="GO:0048568">
    <property type="term" value="P:embryonic organ development"/>
    <property type="evidence" value="ECO:0007669"/>
    <property type="project" value="Ensembl"/>
</dbReference>
<dbReference type="GO" id="GO:0042711">
    <property type="term" value="P:maternal behavior"/>
    <property type="evidence" value="ECO:0007669"/>
    <property type="project" value="Ensembl"/>
</dbReference>
<dbReference type="GO" id="GO:0045892">
    <property type="term" value="P:negative regulation of DNA-templated transcription"/>
    <property type="evidence" value="ECO:0000303"/>
    <property type="project" value="UniProtKB"/>
</dbReference>
<dbReference type="GO" id="GO:0000122">
    <property type="term" value="P:negative regulation of transcription by RNA polymerase II"/>
    <property type="evidence" value="ECO:0000316"/>
    <property type="project" value="BHF-UCL"/>
</dbReference>
<dbReference type="GO" id="GO:0045893">
    <property type="term" value="P:positive regulation of DNA-templated transcription"/>
    <property type="evidence" value="ECO:0000303"/>
    <property type="project" value="ComplexPortal"/>
</dbReference>
<dbReference type="GO" id="GO:0030177">
    <property type="term" value="P:positive regulation of Wnt signaling pathway"/>
    <property type="evidence" value="ECO:0007669"/>
    <property type="project" value="Ensembl"/>
</dbReference>
<dbReference type="GO" id="GO:0065003">
    <property type="term" value="P:protein-containing complex assembly"/>
    <property type="evidence" value="ECO:0007669"/>
    <property type="project" value="Ensembl"/>
</dbReference>
<dbReference type="GO" id="GO:0042127">
    <property type="term" value="P:regulation of cell population proliferation"/>
    <property type="evidence" value="ECO:0007669"/>
    <property type="project" value="Ensembl"/>
</dbReference>
<dbReference type="GO" id="GO:0032355">
    <property type="term" value="P:response to estradiol"/>
    <property type="evidence" value="ECO:0007669"/>
    <property type="project" value="Ensembl"/>
</dbReference>
<dbReference type="GO" id="GO:0009612">
    <property type="term" value="P:response to mechanical stimulus"/>
    <property type="evidence" value="ECO:0007669"/>
    <property type="project" value="Ensembl"/>
</dbReference>
<dbReference type="GO" id="GO:0031667">
    <property type="term" value="P:response to nutrient levels"/>
    <property type="evidence" value="ECO:0007669"/>
    <property type="project" value="Ensembl"/>
</dbReference>
<dbReference type="GO" id="GO:0003229">
    <property type="term" value="P:ventricular cardiac muscle tissue development"/>
    <property type="evidence" value="ECO:0007669"/>
    <property type="project" value="Ensembl"/>
</dbReference>
<dbReference type="GO" id="GO:0016055">
    <property type="term" value="P:Wnt signaling pathway"/>
    <property type="evidence" value="ECO:0007669"/>
    <property type="project" value="Ensembl"/>
</dbReference>
<dbReference type="CDD" id="cd01396">
    <property type="entry name" value="MeCP2_MBD"/>
    <property type="match status" value="1"/>
</dbReference>
<dbReference type="DisProt" id="DP01068"/>
<dbReference type="FunFam" id="3.30.890.10:FF:000003">
    <property type="entry name" value="methyl-CpG-binding domain protein 2"/>
    <property type="match status" value="1"/>
</dbReference>
<dbReference type="Gene3D" id="3.30.890.10">
    <property type="entry name" value="Methyl-cpg-binding Protein 2, Chain A"/>
    <property type="match status" value="1"/>
</dbReference>
<dbReference type="IDEAL" id="IID00739"/>
<dbReference type="InterPro" id="IPR016177">
    <property type="entry name" value="DNA-bd_dom_sf"/>
</dbReference>
<dbReference type="InterPro" id="IPR032343">
    <property type="entry name" value="MBD2/MBD3_p55-bd"/>
</dbReference>
<dbReference type="InterPro" id="IPR025884">
    <property type="entry name" value="MeCpG-bd_2/3_C_dom"/>
</dbReference>
<dbReference type="InterPro" id="IPR001739">
    <property type="entry name" value="Methyl_CpG_DNA-bd"/>
</dbReference>
<dbReference type="PANTHER" id="PTHR12396">
    <property type="entry name" value="METHYL-CPG BINDING PROTEIN, MBD"/>
    <property type="match status" value="1"/>
</dbReference>
<dbReference type="PANTHER" id="PTHR12396:SF5">
    <property type="entry name" value="METHYL-CPG-BINDING DOMAIN PROTEIN 2"/>
    <property type="match status" value="1"/>
</dbReference>
<dbReference type="Pfam" id="PF01429">
    <property type="entry name" value="MBD"/>
    <property type="match status" value="1"/>
</dbReference>
<dbReference type="Pfam" id="PF14048">
    <property type="entry name" value="MBD_C"/>
    <property type="match status" value="1"/>
</dbReference>
<dbReference type="Pfam" id="PF16564">
    <property type="entry name" value="MBDa"/>
    <property type="match status" value="1"/>
</dbReference>
<dbReference type="SMART" id="SM00391">
    <property type="entry name" value="MBD"/>
    <property type="match status" value="1"/>
</dbReference>
<dbReference type="SUPFAM" id="SSF54171">
    <property type="entry name" value="DNA-binding domain"/>
    <property type="match status" value="1"/>
</dbReference>
<dbReference type="PROSITE" id="PS50982">
    <property type="entry name" value="MBD"/>
    <property type="match status" value="1"/>
</dbReference>
<feature type="chain" id="PRO_0000096260" description="Methyl-CpG-binding domain protein 2">
    <location>
        <begin position="1"/>
        <end position="411"/>
    </location>
</feature>
<feature type="domain" description="MBD" evidence="1">
    <location>
        <begin position="145"/>
        <end position="213"/>
    </location>
</feature>
<feature type="region of interest" description="Disordered" evidence="2">
    <location>
        <begin position="1"/>
        <end position="158"/>
    </location>
</feature>
<feature type="region of interest" description="Required for interaction with DHX9 and PRMT5" evidence="11 14">
    <location>
        <begin position="1"/>
        <end position="149"/>
    </location>
</feature>
<feature type="region of interest" description="Disordered" evidence="2">
    <location>
        <begin position="214"/>
        <end position="241"/>
    </location>
</feature>
<feature type="compositionally biased region" description="Basic residues" evidence="2">
    <location>
        <begin position="77"/>
        <end position="95"/>
    </location>
</feature>
<feature type="compositionally biased region" description="Gly residues" evidence="2">
    <location>
        <begin position="98"/>
        <end position="121"/>
    </location>
</feature>
<feature type="compositionally biased region" description="Polar residues" evidence="2">
    <location>
        <begin position="229"/>
        <end position="241"/>
    </location>
</feature>
<feature type="modified residue" description="Phosphoserine" evidence="28 30 31">
    <location>
        <position position="181"/>
    </location>
</feature>
<feature type="modified residue" description="Phosphoserine" evidence="27 28 29 30 32">
    <location>
        <position position="407"/>
    </location>
</feature>
<feature type="splice variant" id="VSP_011077" description="In isoform 3." evidence="23">
    <original>GKPDLNTTLPIRQTASIFKQPVTKVTNHPSNKVKSDPQRMNEQPRQLFWEKRLQGLSASDVTEQIIKT</original>
    <variation>LRWNTHRPAPWHALSRLCLLIRCLLCLECAYPLPLHLVNSYSSKTQLHCLHLWEACPAYSRQNQSFPP</variation>
    <location>
        <begin position="235"/>
        <end position="302"/>
    </location>
</feature>
<feature type="splice variant" id="VSP_011078" description="In isoform 3." evidence="23">
    <location>
        <begin position="303"/>
        <end position="411"/>
    </location>
</feature>
<feature type="strand" evidence="35">
    <location>
        <begin position="160"/>
        <end position="165"/>
    </location>
</feature>
<feature type="turn" evidence="35">
    <location>
        <begin position="170"/>
        <end position="173"/>
    </location>
</feature>
<feature type="strand" evidence="35">
    <location>
        <begin position="175"/>
        <end position="180"/>
    </location>
</feature>
<feature type="helix" evidence="35">
    <location>
        <begin position="190"/>
        <end position="197"/>
    </location>
</feature>
<feature type="helix" evidence="35">
    <location>
        <begin position="198"/>
        <end position="200"/>
    </location>
</feature>
<feature type="strand" evidence="34">
    <location>
        <begin position="204"/>
        <end position="207"/>
    </location>
</feature>
<feature type="turn" evidence="35">
    <location>
        <begin position="208"/>
        <end position="211"/>
    </location>
</feature>
<feature type="helix" evidence="33">
    <location>
        <begin position="366"/>
        <end position="388"/>
    </location>
</feature>
<feature type="turn" evidence="33">
    <location>
        <begin position="389"/>
        <end position="392"/>
    </location>
</feature>
<evidence type="ECO:0000255" key="1">
    <source>
        <dbReference type="PROSITE-ProRule" id="PRU00338"/>
    </source>
</evidence>
<evidence type="ECO:0000256" key="2">
    <source>
        <dbReference type="SAM" id="MobiDB-lite"/>
    </source>
</evidence>
<evidence type="ECO:0000269" key="3">
    <source>
    </source>
</evidence>
<evidence type="ECO:0000269" key="4">
    <source>
    </source>
</evidence>
<evidence type="ECO:0000269" key="5">
    <source>
    </source>
</evidence>
<evidence type="ECO:0000269" key="6">
    <source>
    </source>
</evidence>
<evidence type="ECO:0000269" key="7">
    <source>
    </source>
</evidence>
<evidence type="ECO:0000269" key="8">
    <source>
    </source>
</evidence>
<evidence type="ECO:0000269" key="9">
    <source>
    </source>
</evidence>
<evidence type="ECO:0000269" key="10">
    <source>
    </source>
</evidence>
<evidence type="ECO:0000269" key="11">
    <source>
    </source>
</evidence>
<evidence type="ECO:0000269" key="12">
    <source>
    </source>
</evidence>
<evidence type="ECO:0000269" key="13">
    <source>
    </source>
</evidence>
<evidence type="ECO:0000269" key="14">
    <source>
    </source>
</evidence>
<evidence type="ECO:0000269" key="15">
    <source>
    </source>
</evidence>
<evidence type="ECO:0000269" key="16">
    <source>
    </source>
</evidence>
<evidence type="ECO:0000269" key="17">
    <source>
    </source>
</evidence>
<evidence type="ECO:0000269" key="18">
    <source>
    </source>
</evidence>
<evidence type="ECO:0000269" key="19">
    <source>
    </source>
</evidence>
<evidence type="ECO:0000269" key="20">
    <source>
    </source>
</evidence>
<evidence type="ECO:0000269" key="21">
    <source>
    </source>
</evidence>
<evidence type="ECO:0000269" key="22">
    <source>
    </source>
</evidence>
<evidence type="ECO:0000303" key="23">
    <source>
    </source>
</evidence>
<evidence type="ECO:0000305" key="24"/>
<evidence type="ECO:0000305" key="25">
    <source>
    </source>
</evidence>
<evidence type="ECO:0000312" key="26">
    <source>
        <dbReference type="HGNC" id="HGNC:6917"/>
    </source>
</evidence>
<evidence type="ECO:0007744" key="27">
    <source>
    </source>
</evidence>
<evidence type="ECO:0007744" key="28">
    <source>
    </source>
</evidence>
<evidence type="ECO:0007744" key="29">
    <source>
    </source>
</evidence>
<evidence type="ECO:0007744" key="30">
    <source>
    </source>
</evidence>
<evidence type="ECO:0007744" key="31">
    <source>
    </source>
</evidence>
<evidence type="ECO:0007744" key="32">
    <source>
    </source>
</evidence>
<evidence type="ECO:0007829" key="33">
    <source>
        <dbReference type="PDB" id="2L2L"/>
    </source>
</evidence>
<evidence type="ECO:0007829" key="34">
    <source>
        <dbReference type="PDB" id="6C2F"/>
    </source>
</evidence>
<evidence type="ECO:0007829" key="35">
    <source>
        <dbReference type="PDB" id="7MWM"/>
    </source>
</evidence>
<accession>Q9UBB5</accession>
<accession>O95242</accession>
<accession>Q9UIS8</accession>
<proteinExistence type="evidence at protein level"/>
<reference key="1">
    <citation type="journal article" date="1998" name="Mol. Cell. Biol.">
        <title>Identification and characterization of a family of mammalian methyl-CpG binding proteins.</title>
        <authorList>
            <person name="Hendrich B."/>
            <person name="Bird A."/>
        </authorList>
    </citation>
    <scope>NUCLEOTIDE SEQUENCE [MRNA] (ISOFORM 1)</scope>
    <scope>NUCLEOTIDE SEQUENCE [MRNA] OF 157-411 (ISOFORM 3)</scope>
    <scope>FUNCTION</scope>
    <scope>SUBCELLULAR LOCATION</scope>
    <source>
        <tissue>Testis</tissue>
    </source>
</reference>
<reference key="2">
    <citation type="journal article" date="1999" name="Mamm. Genome">
        <title>Genomic structure and chromosomal mapping of the murine and human mbd1, mbd2, mbd3, and mbd4 genes.</title>
        <authorList>
            <person name="Hendrich B."/>
            <person name="Abbott C."/>
            <person name="McQueen H."/>
            <person name="Chambers D."/>
            <person name="Cross S.H."/>
            <person name="Bird A."/>
        </authorList>
    </citation>
    <scope>NUCLEOTIDE SEQUENCE [GENOMIC DNA]</scope>
</reference>
<reference key="3">
    <citation type="journal article" date="2004" name="Genome Res.">
        <title>The status, quality, and expansion of the NIH full-length cDNA project: the Mammalian Gene Collection (MGC).</title>
        <authorList>
            <consortium name="The MGC Project Team"/>
        </authorList>
    </citation>
    <scope>NUCLEOTIDE SEQUENCE [LARGE SCALE MRNA] (ISOFORM 1)</scope>
    <source>
        <tissue>Lymph</tissue>
    </source>
</reference>
<reference key="4">
    <citation type="journal article" date="1999" name="Nature">
        <title>A mammalian protein with specific demethylase activity for mCpG DNA.</title>
        <authorList>
            <person name="Bhattacharya S.K."/>
            <person name="Ramchandani S."/>
            <person name="Cervoni N."/>
            <person name="Szyf M."/>
        </authorList>
    </citation>
    <scope>FUNCTION (ISOFORM 1)</scope>
    <scope>TISSUE SPECIFICITY</scope>
</reference>
<reference key="5">
    <citation type="journal article" date="1999" name="Nat. Genet.">
        <title>MBD2 is a transcriptional repressor belonging to the MeCP1 histone deacetylase complex.</title>
        <authorList>
            <person name="Ng H.-H."/>
            <person name="Zhang Y."/>
            <person name="Hendrich B."/>
            <person name="Johnson C.A."/>
            <person name="Turner B.M."/>
            <person name="Erdjument-Bromage H."/>
            <person name="Tempst P."/>
            <person name="Reinberg D."/>
            <person name="Bird A."/>
        </authorList>
    </citation>
    <scope>FUNCTION</scope>
    <scope>IDENTIFICATION BY MASS SPECTROMETRY</scope>
    <scope>INTERACTION WITH MECP1 AND HDAC1</scope>
</reference>
<reference key="6">
    <citation type="journal article" date="2000" name="Genes Cells">
        <title>MBD2-MBD3 complex binds to hemi-methylated DNA and forms a complex containing DNMT1 at the replication foci in late S phase.</title>
        <authorList>
            <person name="Tatematsu K."/>
            <person name="Yamazaki T."/>
            <person name="Ishikawa F."/>
        </authorList>
    </citation>
    <scope>FUNCTION</scope>
    <scope>HETERODIMERIZATION WITH MBD3</scope>
    <scope>INTERACTION WITH DNMT1</scope>
</reference>
<reference key="7">
    <citation type="journal article" date="2000" name="J. Biol. Chem.">
        <title>The minimal repression domain of MBD2b overlaps with the methyl-CpG-binding domain and binds directly to Sin3A.</title>
        <authorList>
            <person name="Boeke J."/>
            <person name="Ammerpohl O."/>
            <person name="Kegel S."/>
            <person name="Moehren U."/>
            <person name="Renkawitz R."/>
        </authorList>
    </citation>
    <scope>FUNCTION (ISOFORM 1)</scope>
    <scope>INTERACTION WITH SIN3A</scope>
</reference>
<reference key="8">
    <citation type="journal article" date="2001" name="J. Biol. Chem.">
        <title>Stable histone deacetylase complexes distinguished by the presence of SANT domain proteins CoREST/kiaa0071 and Mta-L1.</title>
        <authorList>
            <person name="Humphrey G.W."/>
            <person name="Wang Y."/>
            <person name="Russanova V.R."/>
            <person name="Hirai T."/>
            <person name="Qin J."/>
            <person name="Nakatani Y."/>
            <person name="Howard B.H."/>
        </authorList>
    </citation>
    <scope>INTERACTION WITH HDAC1</scope>
    <scope>IDENTIFICATION BY MASS SPECTROMETRY</scope>
</reference>
<reference key="9">
    <citation type="journal article" date="2001" name="J. Biol. Chem.">
        <title>Involvement of a novel zinc finger protein, MIZF, in transcriptional repression by interacting with a methyl-CpG-binding protein, MBD2.</title>
        <authorList>
            <person name="Sekimata M."/>
            <person name="Takahashi A."/>
            <person name="Murakami-Sekimata A."/>
            <person name="Homma Y."/>
        </authorList>
    </citation>
    <scope>INTERACTION WITH MIZF</scope>
</reference>
<reference key="10">
    <citation type="journal article" date="2002" name="J. Biol. Chem.">
        <title>Two highly related p66 proteins comprise a new family of potent transcriptional repressors interacting with MBD2 and MBD3.</title>
        <authorList>
            <person name="Brackertz M."/>
            <person name="Boeke J."/>
            <person name="Zhang R."/>
            <person name="Renkawitz R."/>
        </authorList>
    </citation>
    <scope>INTERACTION WITH P66ALPHA AND P66BETA</scope>
    <scope>SUBCELLULAR LOCATION</scope>
</reference>
<reference key="11">
    <citation type="journal article" date="2003" name="Mol. Cell. Biol.">
        <title>MBDin, a novel MBD2-interacting protein, relieves MBD2 repression potential and reactivates transcription from methylated promoters.</title>
        <authorList>
            <person name="Lembo F."/>
            <person name="Pero R."/>
            <person name="Angrisano T."/>
            <person name="Vitiello C."/>
            <person name="Iuliano R."/>
            <person name="Bruni C.B."/>
            <person name="Chiariotti L."/>
        </authorList>
    </citation>
    <scope>INTERACTION WITH GPN1</scope>
</reference>
<reference key="12">
    <citation type="journal article" date="2003" name="Mol. Cell. Biol.">
        <title>Antithetic effects of MBD2a on gene regulation.</title>
        <authorList>
            <person name="Fujita H."/>
            <person name="Fujii R."/>
            <person name="Aratani S."/>
            <person name="Amano T."/>
            <person name="Fukamizu A."/>
            <person name="Nakajima T."/>
        </authorList>
    </citation>
    <scope>FUNCTION</scope>
    <scope>INTERACTION WITH DHX9</scope>
</reference>
<reference key="13">
    <citation type="journal article" date="2005" name="J. Biol. Chem.">
        <title>MBD3L2 interacts with MBD3 and components of the NuRD complex and can oppose MBD2-MeCP1-mediated methylation silencing.</title>
        <authorList>
            <person name="Jin S.-G."/>
            <person name="Jiang C.-L."/>
            <person name="Rauch T."/>
            <person name="Li H."/>
            <person name="Pfeifer G.P."/>
        </authorList>
    </citation>
    <scope>INTERACTION WITH MBD3</scope>
    <scope>SUBCELLULAR LOCATION</scope>
</reference>
<reference key="14">
    <citation type="journal article" date="2006" name="Cell">
        <title>Global, in vivo, and site-specific phosphorylation dynamics in signaling networks.</title>
        <authorList>
            <person name="Olsen J.V."/>
            <person name="Blagoev B."/>
            <person name="Gnad F."/>
            <person name="Macek B."/>
            <person name="Kumar C."/>
            <person name="Mortensen P."/>
            <person name="Mann M."/>
        </authorList>
    </citation>
    <scope>PHOSPHORYLATION [LARGE SCALE ANALYSIS] AT SER-407</scope>
    <scope>IDENTIFICATION BY MASS SPECTROMETRY [LARGE SCALE ANALYSIS]</scope>
    <source>
        <tissue>Cervix carcinoma</tissue>
    </source>
</reference>
<reference key="15">
    <citation type="journal article" date="2006" name="Mol. Cell. Biol.">
        <title>MBD2/NuRD and MBD3/NuRD, two distinct complexes with different biochemical and functional properties.</title>
        <authorList>
            <person name="Le Guezennec X."/>
            <person name="Vermeulen M."/>
            <person name="Brinkman A.B."/>
            <person name="Hoeijmakers W.A."/>
            <person name="Cohen A."/>
            <person name="Lasonder E."/>
            <person name="Stunnenberg H.G."/>
        </authorList>
    </citation>
    <scope>FUNCTION</scope>
    <scope>IDENTIFICATION IN THE NURD COMPLEX</scope>
    <scope>INTERACTION WITH PRMT5</scope>
    <scope>IDENTIFICATION BY MASS SPECTROMETRY</scope>
</reference>
<reference key="16">
    <citation type="journal article" date="2006" name="Nucleic Acids Res.">
        <title>p66alpha and p66beta of the Mi-2/NuRD complex mediate MBD2 and histone interaction.</title>
        <authorList>
            <person name="Brackertz M."/>
            <person name="Gong Z."/>
            <person name="Leers J."/>
            <person name="Renkawitz R."/>
        </authorList>
    </citation>
    <scope>FUNCTION</scope>
    <scope>INTERACTION WITH GATAD2A AND GATAD2B</scope>
</reference>
<reference key="17">
    <citation type="journal article" date="2008" name="Proc. Natl. Acad. Sci. U.S.A.">
        <title>A quantitative atlas of mitotic phosphorylation.</title>
        <authorList>
            <person name="Dephoure N."/>
            <person name="Zhou C."/>
            <person name="Villen J."/>
            <person name="Beausoleil S.A."/>
            <person name="Bakalarski C.E."/>
            <person name="Elledge S.J."/>
            <person name="Gygi S.P."/>
        </authorList>
    </citation>
    <scope>PHOSPHORYLATION [LARGE SCALE ANALYSIS] AT SER-181 AND SER-407</scope>
    <scope>IDENTIFICATION BY MASS SPECTROMETRY [LARGE SCALE ANALYSIS]</scope>
    <source>
        <tissue>Cervix carcinoma</tissue>
    </source>
</reference>
<reference key="18">
    <citation type="journal article" date="2009" name="Anal. Chem.">
        <title>Lys-N and trypsin cover complementary parts of the phosphoproteome in a refined SCX-based approach.</title>
        <authorList>
            <person name="Gauci S."/>
            <person name="Helbig A.O."/>
            <person name="Slijper M."/>
            <person name="Krijgsveld J."/>
            <person name="Heck A.J."/>
            <person name="Mohammed S."/>
        </authorList>
    </citation>
    <scope>IDENTIFICATION BY MASS SPECTROMETRY [LARGE SCALE ANALYSIS]</scope>
</reference>
<reference key="19">
    <citation type="journal article" date="2009" name="Science">
        <title>Regulation of histone acetylation in the nucleus by sphingosine-1-phosphate.</title>
        <authorList>
            <person name="Hait N.C."/>
            <person name="Allegood J."/>
            <person name="Maceyka M."/>
            <person name="Strub G.M."/>
            <person name="Harikumar K.B."/>
            <person name="Singh S.K."/>
            <person name="Luo C."/>
            <person name="Marmorstein R."/>
            <person name="Kordula T."/>
            <person name="Milstien S."/>
            <person name="Spiegel S."/>
        </authorList>
    </citation>
    <scope>INTERACTION WITH SPHK2</scope>
</reference>
<reference key="20">
    <citation type="journal article" date="2009" name="Sci. Signal.">
        <title>Quantitative phosphoproteomic analysis of T cell receptor signaling reveals system-wide modulation of protein-protein interactions.</title>
        <authorList>
            <person name="Mayya V."/>
            <person name="Lundgren D.H."/>
            <person name="Hwang S.-I."/>
            <person name="Rezaul K."/>
            <person name="Wu L."/>
            <person name="Eng J.K."/>
            <person name="Rodionov V."/>
            <person name="Han D.K."/>
        </authorList>
    </citation>
    <scope>PHOSPHORYLATION [LARGE SCALE ANALYSIS] AT SER-407</scope>
    <scope>IDENTIFICATION BY MASS SPECTROMETRY [LARGE SCALE ANALYSIS]</scope>
    <source>
        <tissue>Leukemic T-cell</tissue>
    </source>
</reference>
<reference key="21">
    <citation type="journal article" date="2010" name="Mol. Biosyst.">
        <title>CDK2AP1/DOC-1 is a bona fide subunit of the Mi-2/NuRD complex.</title>
        <authorList>
            <person name="Spruijt C.G."/>
            <person name="Bartels S.J."/>
            <person name="Brinkman A.B."/>
            <person name="Tjeertes J.V."/>
            <person name="Poser I."/>
            <person name="Stunnenberg H.G."/>
            <person name="Vermeulen M."/>
        </authorList>
    </citation>
    <scope>INTERACTION WITH CDK2AP1</scope>
    <scope>IDENTIFICATION BY MASS SPECTROMETRY</scope>
    <scope>SUBCELLULAR LOCATION</scope>
</reference>
<reference key="22">
    <citation type="journal article" date="2010" name="Sci. Signal.">
        <title>Quantitative phosphoproteomics reveals widespread full phosphorylation site occupancy during mitosis.</title>
        <authorList>
            <person name="Olsen J.V."/>
            <person name="Vermeulen M."/>
            <person name="Santamaria A."/>
            <person name="Kumar C."/>
            <person name="Miller M.L."/>
            <person name="Jensen L.J."/>
            <person name="Gnad F."/>
            <person name="Cox J."/>
            <person name="Jensen T.S."/>
            <person name="Nigg E.A."/>
            <person name="Brunak S."/>
            <person name="Mann M."/>
        </authorList>
    </citation>
    <scope>PHOSPHORYLATION [LARGE SCALE ANALYSIS] AT SER-181 AND SER-407</scope>
    <scope>IDENTIFICATION BY MASS SPECTROMETRY [LARGE SCALE ANALYSIS]</scope>
    <source>
        <tissue>Cervix carcinoma</tissue>
    </source>
</reference>
<reference key="23">
    <citation type="journal article" date="2013" name="J. Proteome Res.">
        <title>Toward a comprehensive characterization of a human cancer cell phosphoproteome.</title>
        <authorList>
            <person name="Zhou H."/>
            <person name="Di Palma S."/>
            <person name="Preisinger C."/>
            <person name="Peng M."/>
            <person name="Polat A.N."/>
            <person name="Heck A.J."/>
            <person name="Mohammed S."/>
        </authorList>
    </citation>
    <scope>PHOSPHORYLATION [LARGE SCALE ANALYSIS] AT SER-181</scope>
    <scope>IDENTIFICATION BY MASS SPECTROMETRY [LARGE SCALE ANALYSIS]</scope>
    <source>
        <tissue>Cervix carcinoma</tissue>
        <tissue>Erythroleukemia</tissue>
    </source>
</reference>
<reference key="24">
    <citation type="journal article" date="2014" name="J. Biol. Chem.">
        <title>Probing the dynamic distribution of bound states for methylcytosine-binding domains on DNA.</title>
        <authorList>
            <person name="Cramer J.M."/>
            <person name="Scarsdale J.N."/>
            <person name="Walavalkar N.M."/>
            <person name="Buchwald W.A."/>
            <person name="Ginder G.D."/>
            <person name="Williams D.C. Jr."/>
        </authorList>
    </citation>
    <scope>FUNCTION</scope>
    <scope>DNA-BINDING</scope>
</reference>
<reference key="25">
    <citation type="journal article" date="2014" name="J. Proteomics">
        <title>An enzyme assisted RP-RPLC approach for in-depth analysis of human liver phosphoproteome.</title>
        <authorList>
            <person name="Bian Y."/>
            <person name="Song C."/>
            <person name="Cheng K."/>
            <person name="Dong M."/>
            <person name="Wang F."/>
            <person name="Huang J."/>
            <person name="Sun D."/>
            <person name="Wang L."/>
            <person name="Ye M."/>
            <person name="Zou H."/>
        </authorList>
    </citation>
    <scope>PHOSPHORYLATION [LARGE SCALE ANALYSIS] AT SER-407</scope>
    <scope>IDENTIFICATION BY MASS SPECTROMETRY [LARGE SCALE ANALYSIS]</scope>
    <source>
        <tissue>Liver</tissue>
    </source>
</reference>
<reference key="26">
    <citation type="journal article" date="2016" name="Cell Rep.">
        <title>ZMYND8 Co-localizes with NuRD on Target Genes and Regulates Poly(ADP-Ribose)-Dependent Recruitment of GATAD2A/NuRD to Sites of DNA Damage.</title>
        <authorList>
            <person name="Spruijt C.G."/>
            <person name="Luijsterburg M.S."/>
            <person name="Menafra R."/>
            <person name="Lindeboom R.G."/>
            <person name="Jansen P.W."/>
            <person name="Edupuganti R.R."/>
            <person name="Baltissen M.P."/>
            <person name="Wiegant W.W."/>
            <person name="Voelker-Albert M.C."/>
            <person name="Matarese F."/>
            <person name="Mensinga A."/>
            <person name="Poser I."/>
            <person name="Vos H.R."/>
            <person name="Stunnenberg H.G."/>
            <person name="van Attikum H."/>
            <person name="Vermeulen M."/>
        </authorList>
    </citation>
    <scope>INTERACTION WITH GATAD2A AND GATAD2B</scope>
    <scope>IDENTIFICATION IN THE NURD COMPLEX</scope>
    <scope>IDENTIFICATION BY MASS SPECTROMETRY</scope>
</reference>
<reference key="27">
    <citation type="journal article" date="2017" name="Nat. Struct. Mol. Biol.">
        <title>Site-specific mapping of the human SUMO proteome reveals co-modification with phosphorylation.</title>
        <authorList>
            <person name="Hendriks I.A."/>
            <person name="Lyon D."/>
            <person name="Young C."/>
            <person name="Jensen L.J."/>
            <person name="Vertegaal A.C."/>
            <person name="Nielsen M.L."/>
        </authorList>
    </citation>
    <scope>IDENTIFICATION BY MASS SPECTROMETRY [LARGE SCALE ANALYSIS]</scope>
</reference>
<reference key="28">
    <citation type="journal article" date="2017" name="Nucleic Acids Res.">
        <title>CHD3 and CHD4 form distinct NuRD complexes with different yet overlapping functionality.</title>
        <authorList>
            <person name="Hoffmeister H."/>
            <person name="Fuchs A."/>
            <person name="Erdel F."/>
            <person name="Pinz S."/>
            <person name="Groebner-Ferreira R."/>
            <person name="Bruckmann A."/>
            <person name="Deutzmann R."/>
            <person name="Schwartz U."/>
            <person name="Maldonado R."/>
            <person name="Huber C."/>
            <person name="Dendorfer A.S."/>
            <person name="Rippe K."/>
            <person name="Laengst G."/>
        </authorList>
    </citation>
    <scope>FUNCTION</scope>
    <scope>IDENTIFICATION IN THE NURD COMPLEX</scope>
    <scope>IDENTIFICATION BY MASS SPECTROMETRY</scope>
    <scope>SUBCELLULAR LOCATION</scope>
</reference>
<reference key="29">
    <citation type="journal article" date="2021" name="FEBS J.">
        <title>Cross-linking mass spectrometry reveals the structural topology of peripheral NuRD subunits relative to the core complex.</title>
        <authorList>
            <person name="Spruijt C.G."/>
            <person name="Graewe C."/>
            <person name="Kleinendorst S.C."/>
            <person name="Baltissen M.P.A."/>
            <person name="Vermeulen M."/>
        </authorList>
    </citation>
    <scope>IDENTIFICATION IN THE NURD COMPLEX</scope>
    <scope>INTERACTION WITH GATAD2A</scope>
    <scope>IDENTIFICATION BY MASS SPECTROMETRY</scope>
    <scope>SUBCELLULAR LOCATION</scope>
</reference>
<reference key="30">
    <citation type="journal article" date="2011" name="Proc. Natl. Acad. Sci. U.S.A.">
        <title>p66Alpha-MBD2 coiled-coil interaction and recruitment of Mi-2 are critical for globin gene silencing by the MBD2-NuRD complex.</title>
        <authorList>
            <person name="Gnanapragasam M.N."/>
            <person name="Scarsdale J.N."/>
            <person name="Amaya M.L."/>
            <person name="Webb H.D."/>
            <person name="Desai M.A."/>
            <person name="Walavalkar N.M."/>
            <person name="Wang S.Z."/>
            <person name="Zu Zhu S."/>
            <person name="Ginder G.D."/>
            <person name="Williams D.C. Jr."/>
        </authorList>
    </citation>
    <scope>STRUCTURE BY NMR OF 360-393 IN COMPLEX WITH GATAD2A</scope>
    <scope>SUBUNIT</scope>
    <scope>INTERACTION WITH GATAD2A</scope>
</reference>
<comment type="function">
    <text evidence="4 5 11 13 14 18 20 22">Binds CpG islands in promoters where the DNA is methylated at position 5 of cytosine within CpG dinucleotides (PubMed:9774669). Binds hemimethylated DNA as well (PubMed:10947852, PubMed:24307175). Recruits histone deacetylases and DNA methyltransferases to chromatin (PubMed:10471499, PubMed:10947852). Acts as a component of the histone deacetylase NuRD complex which participates in the remodeling of chromatin (PubMed:16428440, PubMed:28977666). Acts as a transcriptional repressor and plays a role in gene silencing (PubMed:10471499, PubMed:10947852, PubMed:16415179). Functions as a scaffold protein, targeting GATAD2A and GATAD2B to chromatin to promote repression (PubMed:16415179). May enhance the activation of some unmethylated cAMP-responsive promoters (PubMed:12665568).</text>
</comment>
<comment type="subunit">
    <text evidence="4 5 6 7 8 9 10 11 12 13 14 15 16 17 19 21">Heterodimer with MBD3 (via N-terminus) (PubMed:10947852, PubMed:15701600). Component of the MeCP1 complex that contains HDAC1 and HDAC2 (PubMed:10471499, PubMed:11102443). Component of the nucleosome remodeling and deacetylase (NuRD) repressor complex, composed of core proteins MTA1, MTA2, MTA3, RBBP4, RBBP7, HDAC1, HDAC2, MBD2, MBD3, and peripherally associated proteins CDK2AP1, CDK2AP2, GATAD2A, GATAD2B, CHD3, CHD4 and CHD5 (PubMed:16428440, PubMed:27732854, PubMed:28977666, PubMed:33283408). The exact stoichiometry of the NuRD complex is unknown, and some subunits such as MBD2 and MBD3, GATAD2A and GATAD2B, and CHD3, CHD4 and CHD5 define mutually exclusive NuRD complexes (PubMed:16428440, PubMed:28977666, PubMed:33283408). Interacts with CDK2AP1 (PubMed:20523938). Interacts with DHX9 (PubMed:12665568). Interacts with DNMT1 (PubMed:10947852). Interacts with GATAD2A/p66-alpha (PubMed:12183469, PubMed:16415179, PubMed:21490301, PubMed:27732854, PubMed:33283408). Interacts with GATAD2B/p66-beta (PubMed:12183469, PubMed:16415179, PubMed:27732854). Interacts with GPN1 (PubMed:12588985). Interacts with MIZF (PubMed:11553631). Interacts with PRMT5 (PubMed:16428440). Interacts with SIN3A (PubMed:10950960). Interacts with SPHK2 (PubMed:19729656).</text>
</comment>
<comment type="interaction">
    <interactant intactId="EBI-923391">
        <id>Q9UBB5</id>
    </interactant>
    <interactant intactId="EBI-726224">
        <id>Q86YP4</id>
        <label>GATAD2A</label>
    </interactant>
    <organismsDiffer>false</organismsDiffer>
    <experiments>10</experiments>
</comment>
<comment type="interaction">
    <interactant intactId="EBI-923391">
        <id>Q9UBB5</id>
    </interactant>
    <interactant intactId="EBI-2880222">
        <id>Q96QR8</id>
        <label>PURB</label>
    </interactant>
    <organismsDiffer>false</organismsDiffer>
    <experiments>3</experiments>
</comment>
<comment type="interaction">
    <interactant intactId="EBI-923391">
        <id>Q9UBB5</id>
    </interactant>
    <interactant intactId="EBI-395421">
        <id>Q16637</id>
        <label>SMN2</label>
    </interactant>
    <organismsDiffer>false</organismsDiffer>
    <experiments>2</experiments>
</comment>
<comment type="subcellular location">
    <subcellularLocation>
        <location evidence="9 12 16 19 20 21 22">Nucleus</location>
    </subcellularLocation>
    <subcellularLocation>
        <location evidence="16 19">Chromosome</location>
    </subcellularLocation>
    <text evidence="9 14 19">Nuclear, in discrete foci (PubMed:12183469). Detected at replication foci in late S phase. Localizes to methylated chromatin (PubMed:16428440). Localizes to sites of DNA damage in a manner partially dependent on ZMYND8 (PubMed:27732854).</text>
</comment>
<comment type="alternative products">
    <event type="alternative splicing"/>
    <isoform>
        <id>Q9UBB5-1</id>
        <name>1</name>
        <name>MBD2a</name>
        <name>MBD2b</name>
        <sequence type="displayed"/>
    </isoform>
    <isoform>
        <id>Q9UBB5-3</id>
        <name>3</name>
        <sequence type="described" ref="VSP_011077 VSP_011078"/>
    </isoform>
</comment>
<comment type="tissue specificity">
    <text evidence="3">Highly expressed in brain, heart, kidney, stomach, testis and placenta.</text>
</comment>
<comment type="miscellaneous">
    <molecule>Isoform 3</molecule>
    <text evidence="24">Incomplete sequence.</text>
</comment>
<comment type="caution">
    <text evidence="25">Functional studies (PubMed:10050851, PubMed:10950960, PubMed:12665568) have used a C-terminal fragment of isoform 1 which has been described originally as isoform MBD2b but cannot however be proven by supporting cDNA sequences.</text>
</comment>
<comment type="online information" name="Atlas of Genetics and Cytogenetics in Oncology and Haematology">
    <link uri="https://atlasgeneticsoncology.org/gene/41309/mbd2"/>
</comment>
<name>MBD2_HUMAN</name>
<protein>
    <recommendedName>
        <fullName evidence="24">Methyl-CpG-binding domain protein 2</fullName>
    </recommendedName>
    <alternativeName>
        <fullName>Demethylase</fullName>
        <shortName>DMTase</shortName>
    </alternativeName>
    <alternativeName>
        <fullName>Methyl-CpG-binding protein MBD2</fullName>
    </alternativeName>
</protein>
<sequence length="411" mass="43255">MRAHPGGGRCCPEQEEGESAAGGSGAGGDSAIEQGGQGSALAPSPVSGVRREGARGGGRGRGRWKQAGRGGGVCGRGRGRGRGRGRGRGRGRGRGRPPSGGSGLGGDGGGCGGGGSGGGGAPRREPVPFPSGSAGPGPRGPRATESGKRMDCPALPPGWKKEEVIRKSGLSAGKSDVYYFSPSGKKFRSKPQLARYLGNTVDLSSFDFRTGKMMPSKLQKNKQRLRNDPLNQNKGKPDLNTTLPIRQTASIFKQPVTKVTNHPSNKVKSDPQRMNEQPRQLFWEKRLQGLSASDVTEQIIKTMELPKGLQGVGPGSNDETLLSAVASALHTSSAPITGQVSAAVEKNPAVWLNTSQPLCKAFIVTDEDIRKQEERVQQVRKKLEEALMADILSRAADTEEMDIEMDSGDEA</sequence>
<keyword id="KW-0002">3D-structure</keyword>
<keyword id="KW-0025">Alternative splicing</keyword>
<keyword id="KW-0158">Chromosome</keyword>
<keyword id="KW-0238">DNA-binding</keyword>
<keyword id="KW-0539">Nucleus</keyword>
<keyword id="KW-0597">Phosphoprotein</keyword>
<keyword id="KW-1267">Proteomics identification</keyword>
<keyword id="KW-1185">Reference proteome</keyword>
<keyword id="KW-0804">Transcription</keyword>
<keyword id="KW-0805">Transcription regulation</keyword>